<evidence type="ECO:0000255" key="1">
    <source>
        <dbReference type="HAMAP-Rule" id="MF_04073"/>
    </source>
</evidence>
<evidence type="ECO:0000256" key="2">
    <source>
        <dbReference type="SAM" id="MobiDB-lite"/>
    </source>
</evidence>
<feature type="chain" id="PRO_0000323268" description="Protein P">
    <location>
        <begin position="1"/>
        <end position="832"/>
    </location>
</feature>
<feature type="domain" description="Reverse transcriptase" evidence="1">
    <location>
        <begin position="346"/>
        <end position="589"/>
    </location>
</feature>
<feature type="region of interest" description="Terminal protein domain (TP)" evidence="1">
    <location>
        <begin position="1"/>
        <end position="177"/>
    </location>
</feature>
<feature type="region of interest" description="Spacer" evidence="1">
    <location>
        <begin position="178"/>
        <end position="335"/>
    </location>
</feature>
<feature type="region of interest" description="Disordered" evidence="2">
    <location>
        <begin position="186"/>
        <end position="218"/>
    </location>
</feature>
<feature type="region of interest" description="Disordered" evidence="2">
    <location>
        <begin position="239"/>
        <end position="266"/>
    </location>
</feature>
<feature type="region of interest" description="Polymerase/reverse transcriptase domain (RT)" evidence="1">
    <location>
        <begin position="336"/>
        <end position="679"/>
    </location>
</feature>
<feature type="binding site" evidence="1">
    <location>
        <position position="418"/>
    </location>
    <ligand>
        <name>Mg(2+)</name>
        <dbReference type="ChEBI" id="CHEBI:18420"/>
        <note>catalytic</note>
    </ligand>
</feature>
<feature type="binding site" evidence="1">
    <location>
        <position position="540"/>
    </location>
    <ligand>
        <name>Mg(2+)</name>
        <dbReference type="ChEBI" id="CHEBI:18420"/>
        <note>catalytic</note>
    </ligand>
</feature>
<feature type="binding site" evidence="1">
    <location>
        <position position="541"/>
    </location>
    <ligand>
        <name>Mg(2+)</name>
        <dbReference type="ChEBI" id="CHEBI:18420"/>
        <note>catalytic</note>
    </ligand>
</feature>
<feature type="site" description="Priming of reverse-transcription by covalently linking the first nucleotide of the (-)DNA" evidence="1">
    <location>
        <position position="63"/>
    </location>
</feature>
<protein>
    <recommendedName>
        <fullName evidence="1">Protein P</fullName>
    </recommendedName>
    <domain>
        <recommendedName>
            <fullName evidence="1">DNA-directed DNA polymerase</fullName>
            <ecNumber evidence="1">2.7.7.7</ecNumber>
        </recommendedName>
    </domain>
    <domain>
        <recommendedName>
            <fullName evidence="1">RNA-directed DNA polymerase</fullName>
            <ecNumber evidence="1">2.7.7.49</ecNumber>
        </recommendedName>
    </domain>
    <domain>
        <recommendedName>
            <fullName evidence="1">Ribonuclease H</fullName>
            <ecNumber evidence="1">3.1.26.4</ecNumber>
        </recommendedName>
    </domain>
</protein>
<accession>Q67878</accession>
<name>DPOL_HBVD6</name>
<dbReference type="EC" id="2.7.7.7" evidence="1"/>
<dbReference type="EC" id="2.7.7.49" evidence="1"/>
<dbReference type="EC" id="3.1.26.4" evidence="1"/>
<dbReference type="EMBL" id="X65258">
    <property type="protein sequence ID" value="CAA46356.1"/>
    <property type="molecule type" value="Genomic_DNA"/>
</dbReference>
<dbReference type="PIR" id="S20752">
    <property type="entry name" value="S20752"/>
</dbReference>
<dbReference type="Proteomes" id="UP000008282">
    <property type="component" value="Genome"/>
</dbReference>
<dbReference type="GO" id="GO:0003677">
    <property type="term" value="F:DNA binding"/>
    <property type="evidence" value="ECO:0007669"/>
    <property type="project" value="UniProtKB-UniRule"/>
</dbReference>
<dbReference type="GO" id="GO:0003887">
    <property type="term" value="F:DNA-directed DNA polymerase activity"/>
    <property type="evidence" value="ECO:0007669"/>
    <property type="project" value="UniProtKB-UniRule"/>
</dbReference>
<dbReference type="GO" id="GO:0046872">
    <property type="term" value="F:metal ion binding"/>
    <property type="evidence" value="ECO:0007669"/>
    <property type="project" value="UniProtKB-UniRule"/>
</dbReference>
<dbReference type="GO" id="GO:0003964">
    <property type="term" value="F:RNA-directed DNA polymerase activity"/>
    <property type="evidence" value="ECO:0007669"/>
    <property type="project" value="UniProtKB-UniRule"/>
</dbReference>
<dbReference type="GO" id="GO:0004523">
    <property type="term" value="F:RNA-DNA hybrid ribonuclease activity"/>
    <property type="evidence" value="ECO:0007669"/>
    <property type="project" value="UniProtKB-UniRule"/>
</dbReference>
<dbReference type="GO" id="GO:0006260">
    <property type="term" value="P:DNA replication"/>
    <property type="evidence" value="ECO:0007669"/>
    <property type="project" value="UniProtKB-UniRule"/>
</dbReference>
<dbReference type="GO" id="GO:0052170">
    <property type="term" value="P:symbiont-mediated suppression of host innate immune response"/>
    <property type="evidence" value="ECO:0007669"/>
    <property type="project" value="UniProtKB-UniRule"/>
</dbReference>
<dbReference type="FunFam" id="3.30.70.270:FF:000009">
    <property type="entry name" value="Protein P"/>
    <property type="match status" value="1"/>
</dbReference>
<dbReference type="Gene3D" id="3.30.70.270">
    <property type="match status" value="1"/>
</dbReference>
<dbReference type="Gene3D" id="3.10.10.10">
    <property type="entry name" value="HIV Type 1 Reverse Transcriptase, subunit A, domain 1"/>
    <property type="match status" value="1"/>
</dbReference>
<dbReference type="HAMAP" id="MF_04073">
    <property type="entry name" value="HBV_DPOL"/>
    <property type="match status" value="1"/>
</dbReference>
<dbReference type="InterPro" id="IPR043502">
    <property type="entry name" value="DNA/RNA_pol_sf"/>
</dbReference>
<dbReference type="InterPro" id="IPR001462">
    <property type="entry name" value="DNApol_viral_C"/>
</dbReference>
<dbReference type="InterPro" id="IPR000201">
    <property type="entry name" value="DNApol_viral_N"/>
</dbReference>
<dbReference type="InterPro" id="IPR037531">
    <property type="entry name" value="HBV_DPOL"/>
</dbReference>
<dbReference type="InterPro" id="IPR043128">
    <property type="entry name" value="Rev_trsase/Diguanyl_cyclase"/>
</dbReference>
<dbReference type="InterPro" id="IPR000477">
    <property type="entry name" value="RT_dom"/>
</dbReference>
<dbReference type="InterPro" id="IPR051320">
    <property type="entry name" value="Viral_Replic_Matur_Polypro"/>
</dbReference>
<dbReference type="PANTHER" id="PTHR33064">
    <property type="entry name" value="POL PROTEIN"/>
    <property type="match status" value="1"/>
</dbReference>
<dbReference type="PANTHER" id="PTHR33064:SF37">
    <property type="entry name" value="RIBONUCLEASE H"/>
    <property type="match status" value="1"/>
</dbReference>
<dbReference type="Pfam" id="PF00336">
    <property type="entry name" value="DNA_pol_viral_C"/>
    <property type="match status" value="1"/>
</dbReference>
<dbReference type="Pfam" id="PF00242">
    <property type="entry name" value="DNA_pol_viral_N"/>
    <property type="match status" value="1"/>
</dbReference>
<dbReference type="Pfam" id="PF00078">
    <property type="entry name" value="RVT_1"/>
    <property type="match status" value="1"/>
</dbReference>
<dbReference type="SUPFAM" id="SSF56672">
    <property type="entry name" value="DNA/RNA polymerases"/>
    <property type="match status" value="1"/>
</dbReference>
<dbReference type="PROSITE" id="PS50878">
    <property type="entry name" value="RT_POL"/>
    <property type="match status" value="1"/>
</dbReference>
<proteinExistence type="inferred from homology"/>
<keyword id="KW-0235">DNA replication</keyword>
<keyword id="KW-0238">DNA-binding</keyword>
<keyword id="KW-0239">DNA-directed DNA polymerase</keyword>
<keyword id="KW-0255">Endonuclease</keyword>
<keyword id="KW-0945">Host-virus interaction</keyword>
<keyword id="KW-0378">Hydrolase</keyword>
<keyword id="KW-1090">Inhibition of host innate immune response by virus</keyword>
<keyword id="KW-1113">Inhibition of host RLR pathway by virus</keyword>
<keyword id="KW-0460">Magnesium</keyword>
<keyword id="KW-0479">Metal-binding</keyword>
<keyword id="KW-0511">Multifunctional enzyme</keyword>
<keyword id="KW-0540">Nuclease</keyword>
<keyword id="KW-0548">Nucleotidyltransferase</keyword>
<keyword id="KW-0695">RNA-directed DNA polymerase</keyword>
<keyword id="KW-0808">Transferase</keyword>
<keyword id="KW-0899">Viral immunoevasion</keyword>
<organismHost>
    <name type="scientific">Homo sapiens</name>
    <name type="common">Human</name>
    <dbReference type="NCBI Taxonomy" id="9606"/>
</organismHost>
<organismHost>
    <name type="scientific">Pan troglodytes</name>
    <name type="common">Chimpanzee</name>
    <dbReference type="NCBI Taxonomy" id="9598"/>
</organismHost>
<gene>
    <name evidence="1" type="primary">P</name>
</gene>
<organism>
    <name type="scientific">Hepatitis B virus genotype D subtype ayw (isolate Italy/CI/1992)</name>
    <name type="common">HBV-D</name>
    <dbReference type="NCBI Taxonomy" id="489489"/>
    <lineage>
        <taxon>Viruses</taxon>
        <taxon>Riboviria</taxon>
        <taxon>Pararnavirae</taxon>
        <taxon>Artverviricota</taxon>
        <taxon>Revtraviricetes</taxon>
        <taxon>Blubervirales</taxon>
        <taxon>Hepadnaviridae</taxon>
        <taxon>Orthohepadnavirus</taxon>
        <taxon>Hepatitis B virus</taxon>
        <taxon>hepatitis B virus genotype D</taxon>
    </lineage>
</organism>
<comment type="function">
    <text evidence="1">Multifunctional enzyme that converts the viral RNA genome into dsDNA in viral cytoplasmic capsids. This enzyme displays a DNA polymerase activity that can copy either DNA or RNA templates, and a ribonuclease H (RNase H) activity that cleaves the RNA strand of RNA-DNA heteroduplexes in a partially processive 3'- to 5'-endonucleasic mode. Neo-synthesized pregenomic RNA (pgRNA) are encapsidated together with the P protein, and reverse-transcribed inside the nucleocapsid. Initiation of reverse-transcription occurs first by binding the epsilon loop on the pgRNA genome, and is initiated by protein priming, thereby the 5'-end of (-)DNA is covalently linked to P protein. Partial (+)DNA is synthesized from the (-)DNA template and generates the relaxed circular DNA (RC-DNA) genome. After budding and infection, the RC-DNA migrates in the nucleus, and is converted into a plasmid-like covalently closed circular DNA (cccDNA). The activity of P protein does not seem to be necessary for cccDNA generation, and is presumably released from (+)DNA by host nuclear DNA repair machinery.</text>
</comment>
<comment type="catalytic activity">
    <reaction evidence="1">
        <text>DNA(n) + a 2'-deoxyribonucleoside 5'-triphosphate = DNA(n+1) + diphosphate</text>
        <dbReference type="Rhea" id="RHEA:22508"/>
        <dbReference type="Rhea" id="RHEA-COMP:17339"/>
        <dbReference type="Rhea" id="RHEA-COMP:17340"/>
        <dbReference type="ChEBI" id="CHEBI:33019"/>
        <dbReference type="ChEBI" id="CHEBI:61560"/>
        <dbReference type="ChEBI" id="CHEBI:173112"/>
        <dbReference type="EC" id="2.7.7.7"/>
    </reaction>
</comment>
<comment type="catalytic activity">
    <reaction evidence="1">
        <text>DNA(n) + a 2'-deoxyribonucleoside 5'-triphosphate = DNA(n+1) + diphosphate</text>
        <dbReference type="Rhea" id="RHEA:22508"/>
        <dbReference type="Rhea" id="RHEA-COMP:17339"/>
        <dbReference type="Rhea" id="RHEA-COMP:17340"/>
        <dbReference type="ChEBI" id="CHEBI:33019"/>
        <dbReference type="ChEBI" id="CHEBI:61560"/>
        <dbReference type="ChEBI" id="CHEBI:173112"/>
        <dbReference type="EC" id="2.7.7.49"/>
    </reaction>
</comment>
<comment type="catalytic activity">
    <reaction evidence="1">
        <text>Endonucleolytic cleavage to 5'-phosphomonoester.</text>
        <dbReference type="EC" id="3.1.26.4"/>
    </reaction>
</comment>
<comment type="activity regulation">
    <text evidence="1">Activated by host HSP70 and HSP40 in vitro to be able to bind the epsilon loop of the pgRNA. Because deletion of the RNase H region renders the protein partly chaperone-independent, the chaperones may be needed indirectly to relieve occlusion of the RNA-binding site by this domain. Inhibited by several reverse-transcriptase inhibitors: Lamivudine, Adefovir and Entecavir.</text>
</comment>
<comment type="domain">
    <text evidence="1">Terminal protein domain (TP) is hepadnavirus-specific. Spacer domain is highly variable and separates the TP and RT domains. Polymerase/reverse-transcriptase domain (RT) and ribonuclease H domain (RH) are similar to retrovirus reverse transcriptase/RNase H.</text>
</comment>
<comment type="domain">
    <text evidence="1">The polymerase/reverse transcriptase (RT) and ribonuclease H (RH) domains are structured in five subdomains: finger, palm, thumb, connection and RNase H. Within the palm subdomain, the 'primer grip' region is thought to be involved in the positioning of the primer terminus for accommodating the incoming nucleotide. The RH domain stabilizes the association of RT with primer-template.</text>
</comment>
<comment type="miscellaneous">
    <text evidence="1">Hepadnaviral virions contain probably just one P protein molecule per particle.</text>
</comment>
<comment type="similarity">
    <text evidence="1">Belongs to the hepadnaviridae P protein family.</text>
</comment>
<reference key="1">
    <citation type="submission" date="1992-03" db="EMBL/GenBank/DDBJ databases">
        <title>Sequence analysis of HBV genomes isolated from patients with HBsAg negative chronic liver disease.</title>
        <authorList>
            <person name="Lai M.E."/>
            <person name="Mazzoleni A.P."/>
            <person name="Balestrieri A."/>
            <person name="Melis A."/>
            <person name="Porru A."/>
        </authorList>
    </citation>
    <scope>NUCLEOTIDE SEQUENCE [GENOMIC DNA]</scope>
</reference>
<reference key="2">
    <citation type="journal article" date="2007" name="World J. Gastroenterol.">
        <title>Hepatitis B virus replication.</title>
        <authorList>
            <person name="Beck J."/>
            <person name="Nassal M."/>
        </authorList>
    </citation>
    <scope>REVIEW</scope>
</reference>
<sequence length="832" mass="93872">MPLSYQHFRRLLLLDDEAGPLEEELPRLADEGLNRRVAEDLNLGNLNVSIPWTHKVGNFTGFYSSTVPVFNPHWETPSFPNIHLHQDIIKKCEQFVGPLTVNEKRRLQLIMPARFYPKVTKYLPLDKGIKPYYPEHLVNHYFQTRHYLHTLWKAGILYKRETTHSASFCGSPYSWEQDLQHGAESIHQQSSGILSRPPVGSSLQSKHRKSRLGLQSQQGHLARRQQGWSWSIRAGTHPTARRPFGVEPSGSGHTTHRASKSASCLYQSPDRKATYPSVSTFERHSSSGRAVELHNFPPNSARSQSERPIFPCWWLQFRNSKPCSDYCLSLIVNLLEDWGPCDEYGEHHIRIPRTPARVTGGVFLVDKNPHNTAESRLVVDFSQFSRGNYRVSWPKFAVPNLQSLTNLLSSNLSWLSLDVSAGFYHLPLHPAAMPHLLVGSSGVSRYVARLSSNSRNNNNQYGTMQNLHDSCSRQLYVSLMLLYQNFGWKLHLYSHPIVLGFRKIPMGVGLSPFLLAQFTSAICSVVRRAFPHCLAFSYMDDVVLGAKSVQHLESLFTAVTNFLLSLGIHLNPNKTKRWGYSLHFMGYVIGCYGSLPQEHIIQKIKECFRKVPVNRPIDWKVCQRIVGLLGFAAPFTQCGYPALMPLYACIQFKQAFTFSPTYKAFLCKQYLNLYPVARQRPGLCQVFADATPTGWGLGMGHQRMRGTFSAPLPIHTAELLAACFARSRSGANILGTDNSVVLSRKYTSFPWLLGCAANWILRGTSFVYVPSALNPADDPSRGRLGLSRPLLCLPFRPTTGRTSLYADSPSVPSHLPDRVHFASPLHVAWRPP</sequence>